<reference key="1">
    <citation type="journal article" date="2005" name="Science">
        <title>The transcriptional landscape of the mammalian genome.</title>
        <authorList>
            <person name="Carninci P."/>
            <person name="Kasukawa T."/>
            <person name="Katayama S."/>
            <person name="Gough J."/>
            <person name="Frith M.C."/>
            <person name="Maeda N."/>
            <person name="Oyama R."/>
            <person name="Ravasi T."/>
            <person name="Lenhard B."/>
            <person name="Wells C."/>
            <person name="Kodzius R."/>
            <person name="Shimokawa K."/>
            <person name="Bajic V.B."/>
            <person name="Brenner S.E."/>
            <person name="Batalov S."/>
            <person name="Forrest A.R."/>
            <person name="Zavolan M."/>
            <person name="Davis M.J."/>
            <person name="Wilming L.G."/>
            <person name="Aidinis V."/>
            <person name="Allen J.E."/>
            <person name="Ambesi-Impiombato A."/>
            <person name="Apweiler R."/>
            <person name="Aturaliya R.N."/>
            <person name="Bailey T.L."/>
            <person name="Bansal M."/>
            <person name="Baxter L."/>
            <person name="Beisel K.W."/>
            <person name="Bersano T."/>
            <person name="Bono H."/>
            <person name="Chalk A.M."/>
            <person name="Chiu K.P."/>
            <person name="Choudhary V."/>
            <person name="Christoffels A."/>
            <person name="Clutterbuck D.R."/>
            <person name="Crowe M.L."/>
            <person name="Dalla E."/>
            <person name="Dalrymple B.P."/>
            <person name="de Bono B."/>
            <person name="Della Gatta G."/>
            <person name="di Bernardo D."/>
            <person name="Down T."/>
            <person name="Engstrom P."/>
            <person name="Fagiolini M."/>
            <person name="Faulkner G."/>
            <person name="Fletcher C.F."/>
            <person name="Fukushima T."/>
            <person name="Furuno M."/>
            <person name="Futaki S."/>
            <person name="Gariboldi M."/>
            <person name="Georgii-Hemming P."/>
            <person name="Gingeras T.R."/>
            <person name="Gojobori T."/>
            <person name="Green R.E."/>
            <person name="Gustincich S."/>
            <person name="Harbers M."/>
            <person name="Hayashi Y."/>
            <person name="Hensch T.K."/>
            <person name="Hirokawa N."/>
            <person name="Hill D."/>
            <person name="Huminiecki L."/>
            <person name="Iacono M."/>
            <person name="Ikeo K."/>
            <person name="Iwama A."/>
            <person name="Ishikawa T."/>
            <person name="Jakt M."/>
            <person name="Kanapin A."/>
            <person name="Katoh M."/>
            <person name="Kawasawa Y."/>
            <person name="Kelso J."/>
            <person name="Kitamura H."/>
            <person name="Kitano H."/>
            <person name="Kollias G."/>
            <person name="Krishnan S.P."/>
            <person name="Kruger A."/>
            <person name="Kummerfeld S.K."/>
            <person name="Kurochkin I.V."/>
            <person name="Lareau L.F."/>
            <person name="Lazarevic D."/>
            <person name="Lipovich L."/>
            <person name="Liu J."/>
            <person name="Liuni S."/>
            <person name="McWilliam S."/>
            <person name="Madan Babu M."/>
            <person name="Madera M."/>
            <person name="Marchionni L."/>
            <person name="Matsuda H."/>
            <person name="Matsuzawa S."/>
            <person name="Miki H."/>
            <person name="Mignone F."/>
            <person name="Miyake S."/>
            <person name="Morris K."/>
            <person name="Mottagui-Tabar S."/>
            <person name="Mulder N."/>
            <person name="Nakano N."/>
            <person name="Nakauchi H."/>
            <person name="Ng P."/>
            <person name="Nilsson R."/>
            <person name="Nishiguchi S."/>
            <person name="Nishikawa S."/>
            <person name="Nori F."/>
            <person name="Ohara O."/>
            <person name="Okazaki Y."/>
            <person name="Orlando V."/>
            <person name="Pang K.C."/>
            <person name="Pavan W.J."/>
            <person name="Pavesi G."/>
            <person name="Pesole G."/>
            <person name="Petrovsky N."/>
            <person name="Piazza S."/>
            <person name="Reed J."/>
            <person name="Reid J.F."/>
            <person name="Ring B.Z."/>
            <person name="Ringwald M."/>
            <person name="Rost B."/>
            <person name="Ruan Y."/>
            <person name="Salzberg S.L."/>
            <person name="Sandelin A."/>
            <person name="Schneider C."/>
            <person name="Schoenbach C."/>
            <person name="Sekiguchi K."/>
            <person name="Semple C.A."/>
            <person name="Seno S."/>
            <person name="Sessa L."/>
            <person name="Sheng Y."/>
            <person name="Shibata Y."/>
            <person name="Shimada H."/>
            <person name="Shimada K."/>
            <person name="Silva D."/>
            <person name="Sinclair B."/>
            <person name="Sperling S."/>
            <person name="Stupka E."/>
            <person name="Sugiura K."/>
            <person name="Sultana R."/>
            <person name="Takenaka Y."/>
            <person name="Taki K."/>
            <person name="Tammoja K."/>
            <person name="Tan S.L."/>
            <person name="Tang S."/>
            <person name="Taylor M.S."/>
            <person name="Tegner J."/>
            <person name="Teichmann S.A."/>
            <person name="Ueda H.R."/>
            <person name="van Nimwegen E."/>
            <person name="Verardo R."/>
            <person name="Wei C.L."/>
            <person name="Yagi K."/>
            <person name="Yamanishi H."/>
            <person name="Zabarovsky E."/>
            <person name="Zhu S."/>
            <person name="Zimmer A."/>
            <person name="Hide W."/>
            <person name="Bult C."/>
            <person name="Grimmond S.M."/>
            <person name="Teasdale R.D."/>
            <person name="Liu E.T."/>
            <person name="Brusic V."/>
            <person name="Quackenbush J."/>
            <person name="Wahlestedt C."/>
            <person name="Mattick J.S."/>
            <person name="Hume D.A."/>
            <person name="Kai C."/>
            <person name="Sasaki D."/>
            <person name="Tomaru Y."/>
            <person name="Fukuda S."/>
            <person name="Kanamori-Katayama M."/>
            <person name="Suzuki M."/>
            <person name="Aoki J."/>
            <person name="Arakawa T."/>
            <person name="Iida J."/>
            <person name="Imamura K."/>
            <person name="Itoh M."/>
            <person name="Kato T."/>
            <person name="Kawaji H."/>
            <person name="Kawagashira N."/>
            <person name="Kawashima T."/>
            <person name="Kojima M."/>
            <person name="Kondo S."/>
            <person name="Konno H."/>
            <person name="Nakano K."/>
            <person name="Ninomiya N."/>
            <person name="Nishio T."/>
            <person name="Okada M."/>
            <person name="Plessy C."/>
            <person name="Shibata K."/>
            <person name="Shiraki T."/>
            <person name="Suzuki S."/>
            <person name="Tagami M."/>
            <person name="Waki K."/>
            <person name="Watahiki A."/>
            <person name="Okamura-Oho Y."/>
            <person name="Suzuki H."/>
            <person name="Kawai J."/>
            <person name="Hayashizaki Y."/>
        </authorList>
    </citation>
    <scope>NUCLEOTIDE SEQUENCE [LARGE SCALE MRNA]</scope>
    <source>
        <strain>C57BL/6J</strain>
        <tissue>Lung</tissue>
        <tissue>Thymus</tissue>
    </source>
</reference>
<reference key="2">
    <citation type="journal article" date="2009" name="PLoS Biol.">
        <title>Lineage-specific biology revealed by a finished genome assembly of the mouse.</title>
        <authorList>
            <person name="Church D.M."/>
            <person name="Goodstadt L."/>
            <person name="Hillier L.W."/>
            <person name="Zody M.C."/>
            <person name="Goldstein S."/>
            <person name="She X."/>
            <person name="Bult C.J."/>
            <person name="Agarwala R."/>
            <person name="Cherry J.L."/>
            <person name="DiCuccio M."/>
            <person name="Hlavina W."/>
            <person name="Kapustin Y."/>
            <person name="Meric P."/>
            <person name="Maglott D."/>
            <person name="Birtle Z."/>
            <person name="Marques A.C."/>
            <person name="Graves T."/>
            <person name="Zhou S."/>
            <person name="Teague B."/>
            <person name="Potamousis K."/>
            <person name="Churas C."/>
            <person name="Place M."/>
            <person name="Herschleb J."/>
            <person name="Runnheim R."/>
            <person name="Forrest D."/>
            <person name="Amos-Landgraf J."/>
            <person name="Schwartz D.C."/>
            <person name="Cheng Z."/>
            <person name="Lindblad-Toh K."/>
            <person name="Eichler E.E."/>
            <person name="Ponting C.P."/>
        </authorList>
    </citation>
    <scope>NUCLEOTIDE SEQUENCE [LARGE SCALE GENOMIC DNA]</scope>
    <source>
        <strain>C57BL/6J</strain>
    </source>
</reference>
<reference key="3">
    <citation type="submission" date="2005-07" db="EMBL/GenBank/DDBJ databases">
        <authorList>
            <person name="Mural R.J."/>
            <person name="Adams M.D."/>
            <person name="Myers E.W."/>
            <person name="Smith H.O."/>
            <person name="Venter J.C."/>
        </authorList>
    </citation>
    <scope>NUCLEOTIDE SEQUENCE [LARGE SCALE GENOMIC DNA]</scope>
</reference>
<reference key="4">
    <citation type="journal article" date="2004" name="Genome Res.">
        <title>The status, quality, and expansion of the NIH full-length cDNA project: the Mammalian Gene Collection (MGC).</title>
        <authorList>
            <consortium name="The MGC Project Team"/>
        </authorList>
    </citation>
    <scope>NUCLEOTIDE SEQUENCE [LARGE SCALE MRNA]</scope>
    <source>
        <tissue>Liver</tissue>
    </source>
</reference>
<reference key="5">
    <citation type="journal article" date="2001" name="J. Biol. Chem.">
        <title>Molecular and biochemical characterization of rat epsilon-N-trimethyllysine hydroxylase, the first enzyme of carnitine biosynthesis.</title>
        <authorList>
            <person name="Vaz F.M."/>
            <person name="Ofman R."/>
            <person name="Westinga K."/>
            <person name="Back J.W."/>
            <person name="Wanders R.J.A."/>
        </authorList>
    </citation>
    <scope>NUCLEOTIDE SEQUENCE [MRNA] OF 13-421</scope>
    <source>
        <strain>FVB/N</strain>
    </source>
</reference>
<reference key="6">
    <citation type="journal article" date="2007" name="Gene">
        <title>Functional characterization of the TMLH gene: promoter analysis, in situ hybridization, identification and mapping of alternative splicing variants.</title>
        <authorList>
            <person name="Monfregola J."/>
            <person name="Napolitano G."/>
            <person name="Conte I."/>
            <person name="Cevenini A."/>
            <person name="Migliaccio C."/>
            <person name="D'Urso M."/>
            <person name="Ursini M.V."/>
        </authorList>
    </citation>
    <scope>DEVELOPMENTAL STAGE</scope>
</reference>
<reference key="7">
    <citation type="journal article" date="2010" name="Cell">
        <title>A tissue-specific atlas of mouse protein phosphorylation and expression.</title>
        <authorList>
            <person name="Huttlin E.L."/>
            <person name="Jedrychowski M.P."/>
            <person name="Elias J.E."/>
            <person name="Goswami T."/>
            <person name="Rad R."/>
            <person name="Beausoleil S.A."/>
            <person name="Villen J."/>
            <person name="Haas W."/>
            <person name="Sowa M.E."/>
            <person name="Gygi S.P."/>
        </authorList>
    </citation>
    <scope>IDENTIFICATION BY MASS SPECTROMETRY [LARGE SCALE ANALYSIS]</scope>
    <source>
        <tissue>Brown adipose tissue</tissue>
        <tissue>Heart</tissue>
        <tissue>Kidney</tissue>
        <tissue>Liver</tissue>
        <tissue>Pancreas</tissue>
        <tissue>Testis</tissue>
    </source>
</reference>
<reference key="8">
    <citation type="journal article" date="2013" name="Proc. Natl. Acad. Sci. U.S.A.">
        <title>Label-free quantitative proteomics of the lysine acetylome in mitochondria identifies substrates of SIRT3 in metabolic pathways.</title>
        <authorList>
            <person name="Rardin M.J."/>
            <person name="Newman J.C."/>
            <person name="Held J.M."/>
            <person name="Cusack M.P."/>
            <person name="Sorensen D.J."/>
            <person name="Li B."/>
            <person name="Schilling B."/>
            <person name="Mooney S.D."/>
            <person name="Kahn C.R."/>
            <person name="Verdin E."/>
            <person name="Gibson B.W."/>
        </authorList>
    </citation>
    <scope>ACETYLATION [LARGE SCALE ANALYSIS] AT LYS-179</scope>
    <scope>IDENTIFICATION BY MASS SPECTROMETRY [LARGE SCALE ANALYSIS]</scope>
    <source>
        <tissue>Liver</tissue>
    </source>
</reference>
<keyword id="KW-0007">Acetylation</keyword>
<keyword id="KW-0124">Carnitine biosynthesis</keyword>
<keyword id="KW-0223">Dioxygenase</keyword>
<keyword id="KW-0408">Iron</keyword>
<keyword id="KW-0479">Metal-binding</keyword>
<keyword id="KW-0496">Mitochondrion</keyword>
<keyword id="KW-0560">Oxidoreductase</keyword>
<keyword id="KW-1185">Reference proteome</keyword>
<keyword id="KW-0809">Transit peptide</keyword>
<gene>
    <name type="primary">Tmlhe</name>
    <name type="synonym">Tmlh</name>
</gene>
<sequence>MWYHKLLHQQSRLRNLMKRGNIAQGLHLSNFKSLFSSSIHWCHTTSKSVNCTWHQHEDHLELQYAGTVMRFDYVWLRDHCRSASCYNSKTHQRSLDTASVDLCIKPKTVHLDETMLFFTWPDGHVTRYDLDWLVKNSYEGQKQKVIQPRILWNSKLYQQAQVPSVDFQCFLETNEGLKKFLQNFLLYGIAFVENVPPTEEHTEKLAERISLIRETIYGRMWYFTSDFSRGDTAYTKLALDRHTDTTYFQEPCGIQVFHCLKHEGTGGRTLLVDGFYAAQQVLQKAPEEFELLSKVPLKHEYIENVGQCHNHMIGVGPILNIYPWNKELYLIRYNNYDRAVINTVPYDVVHRWYTAHRTLTTELRRPENELWVKLKPGKVLFIDNWRVLHGRESFTGYRQLCGCYLTRDDVLNTARLLGLHA</sequence>
<organism>
    <name type="scientific">Mus musculus</name>
    <name type="common">Mouse</name>
    <dbReference type="NCBI Taxonomy" id="10090"/>
    <lineage>
        <taxon>Eukaryota</taxon>
        <taxon>Metazoa</taxon>
        <taxon>Chordata</taxon>
        <taxon>Craniata</taxon>
        <taxon>Vertebrata</taxon>
        <taxon>Euteleostomi</taxon>
        <taxon>Mammalia</taxon>
        <taxon>Eutheria</taxon>
        <taxon>Euarchontoglires</taxon>
        <taxon>Glires</taxon>
        <taxon>Rodentia</taxon>
        <taxon>Myomorpha</taxon>
        <taxon>Muroidea</taxon>
        <taxon>Muridae</taxon>
        <taxon>Murinae</taxon>
        <taxon>Mus</taxon>
        <taxon>Mus</taxon>
    </lineage>
</organism>
<feature type="transit peptide" description="Mitochondrion" evidence="1">
    <location>
        <begin position="1"/>
        <end position="15"/>
    </location>
</feature>
<feature type="chain" id="PRO_0000002796" description="Trimethyllysine dioxygenase, mitochondrial">
    <location>
        <begin position="16"/>
        <end position="421"/>
    </location>
</feature>
<feature type="binding site" evidence="1">
    <location>
        <position position="242"/>
    </location>
    <ligand>
        <name>Fe cation</name>
        <dbReference type="ChEBI" id="CHEBI:24875"/>
        <note>catalytic</note>
    </ligand>
</feature>
<feature type="binding site" evidence="1">
    <location>
        <position position="244"/>
    </location>
    <ligand>
        <name>Fe cation</name>
        <dbReference type="ChEBI" id="CHEBI:24875"/>
        <note>catalytic</note>
    </ligand>
</feature>
<feature type="binding site" evidence="1">
    <location>
        <position position="389"/>
    </location>
    <ligand>
        <name>Fe cation</name>
        <dbReference type="ChEBI" id="CHEBI:24875"/>
        <note>catalytic</note>
    </ligand>
</feature>
<feature type="modified residue" description="N6-acetyllysine" evidence="6">
    <location>
        <position position="179"/>
    </location>
</feature>
<feature type="modified residue" description="N6-acetyllysine" evidence="3">
    <location>
        <position position="236"/>
    </location>
</feature>
<feature type="sequence conflict" description="In Ref. 1; BAE36549." evidence="5" ref="1">
    <original>H</original>
    <variation>Q</variation>
    <location>
        <position position="8"/>
    </location>
</feature>
<feature type="sequence conflict" description="In Ref. 1; BAE36549." evidence="5" ref="1">
    <original>G</original>
    <variation>K</variation>
    <location>
        <position position="188"/>
    </location>
</feature>
<protein>
    <recommendedName>
        <fullName>Trimethyllysine dioxygenase, mitochondrial</fullName>
        <ecNumber evidence="3">1.14.11.8</ecNumber>
    </recommendedName>
    <alternativeName>
        <fullName>Epsilon-trimethyllysine 2-oxoglutarate dioxygenase</fullName>
    </alternativeName>
    <alternativeName>
        <fullName>TML hydroxylase</fullName>
    </alternativeName>
    <alternativeName>
        <fullName>TML-alpha-ketoglutarate dioxygenase</fullName>
        <shortName>TML dioxygenase</shortName>
        <shortName>TMLD</shortName>
    </alternativeName>
</protein>
<proteinExistence type="evidence at protein level"/>
<comment type="function">
    <text evidence="3">Converts trimethyllysine (TML) into hydroxytrimethyllysine (HTML).</text>
</comment>
<comment type="catalytic activity">
    <reaction evidence="3">
        <text>N(6),N(6),N(6)-trimethyl-L-lysine + 2-oxoglutarate + O2 = (3S)-3-hydroxy-N(6),N(6),N(6)-trimethyl-L-lysine + succinate + CO2</text>
        <dbReference type="Rhea" id="RHEA:14181"/>
        <dbReference type="ChEBI" id="CHEBI:15379"/>
        <dbReference type="ChEBI" id="CHEBI:16526"/>
        <dbReference type="ChEBI" id="CHEBI:16810"/>
        <dbReference type="ChEBI" id="CHEBI:30031"/>
        <dbReference type="ChEBI" id="CHEBI:58100"/>
        <dbReference type="ChEBI" id="CHEBI:141499"/>
        <dbReference type="EC" id="1.14.11.8"/>
    </reaction>
</comment>
<comment type="cofactor">
    <cofactor evidence="1">
        <name>Fe(2+)</name>
        <dbReference type="ChEBI" id="CHEBI:29033"/>
    </cofactor>
    <text evidence="1">Binds 1 Fe(2+) ion per subunit.</text>
</comment>
<comment type="cofactor">
    <cofactor>
        <name>L-ascorbate</name>
        <dbReference type="ChEBI" id="CHEBI:38290"/>
    </cofactor>
</comment>
<comment type="pathway">
    <text>Amine and polyamine biosynthesis; carnitine biosynthesis.</text>
</comment>
<comment type="subunit">
    <text evidence="2">Homodimer.</text>
</comment>
<comment type="subcellular location">
    <subcellularLocation>
        <location evidence="3">Mitochondrion matrix</location>
    </subcellularLocation>
</comment>
<comment type="developmental stage">
    <text evidence="4">Present already at 9.0 dpc. At 10.5 dpc, expressed throughout the embryo. At 12.5 dpc, higher levels in the developing lung, liver and brain compared to other tissues. In the postnatal day 7 brain, high levels in the Purkinje cell layer of the cerebellum and in the hippocampal areas of the dentate gyrus and CA1, CA2 and CA3 pyramidal cells.</text>
</comment>
<comment type="similarity">
    <text evidence="5">Belongs to the gamma-BBH/TMLD family.</text>
</comment>
<comment type="sequence caution" evidence="5">
    <conflict type="erroneous initiation">
        <sequence resource="EMBL-CDS" id="AAK54387"/>
    </conflict>
    <text>Truncated N-terminus.</text>
</comment>
<evidence type="ECO:0000250" key="1"/>
<evidence type="ECO:0000250" key="2">
    <source>
        <dbReference type="UniProtKB" id="Q91ZW6"/>
    </source>
</evidence>
<evidence type="ECO:0000250" key="3">
    <source>
        <dbReference type="UniProtKB" id="Q9NVH6"/>
    </source>
</evidence>
<evidence type="ECO:0000269" key="4">
    <source>
    </source>
</evidence>
<evidence type="ECO:0000305" key="5"/>
<evidence type="ECO:0007744" key="6">
    <source>
    </source>
</evidence>
<accession>Q91ZE0</accession>
<accession>Q3TSX6</accession>
<accession>Q3UMX1</accession>
<accession>Q91XH1</accession>
<dbReference type="EC" id="1.14.11.8" evidence="3"/>
<dbReference type="EMBL" id="AK144627">
    <property type="protein sequence ID" value="BAE25977.1"/>
    <property type="molecule type" value="mRNA"/>
</dbReference>
<dbReference type="EMBL" id="AK161724">
    <property type="protein sequence ID" value="BAE36549.1"/>
    <property type="molecule type" value="mRNA"/>
</dbReference>
<dbReference type="EMBL" id="CAAA01137825">
    <property type="status" value="NOT_ANNOTATED_CDS"/>
    <property type="molecule type" value="Genomic_DNA"/>
</dbReference>
<dbReference type="EMBL" id="CAAA01183048">
    <property type="status" value="NOT_ANNOTATED_CDS"/>
    <property type="molecule type" value="Genomic_DNA"/>
</dbReference>
<dbReference type="EMBL" id="CAAA01120074">
    <property type="status" value="NOT_ANNOTATED_CDS"/>
    <property type="molecule type" value="Genomic_DNA"/>
</dbReference>
<dbReference type="EMBL" id="CAAA01019119">
    <property type="status" value="NOT_ANNOTATED_CDS"/>
    <property type="molecule type" value="Genomic_DNA"/>
</dbReference>
<dbReference type="EMBL" id="CH466822">
    <property type="protein sequence ID" value="EDL07804.1"/>
    <property type="molecule type" value="Genomic_DNA"/>
</dbReference>
<dbReference type="EMBL" id="BC010495">
    <property type="protein sequence ID" value="AAH10495.1"/>
    <property type="molecule type" value="mRNA"/>
</dbReference>
<dbReference type="EMBL" id="BC115365">
    <property type="protein sequence ID" value="AAI15366.1"/>
    <property type="molecule type" value="mRNA"/>
</dbReference>
<dbReference type="EMBL" id="AY033513">
    <property type="protein sequence ID" value="AAK54387.1"/>
    <property type="status" value="ALT_INIT"/>
    <property type="molecule type" value="mRNA"/>
</dbReference>
<dbReference type="RefSeq" id="NP_620097.1">
    <property type="nucleotide sequence ID" value="NM_138758.2"/>
</dbReference>
<dbReference type="RefSeq" id="XP_036018102.1">
    <property type="nucleotide sequence ID" value="XM_036162209.1"/>
</dbReference>
<dbReference type="SMR" id="Q91ZE0"/>
<dbReference type="BioGRID" id="228687">
    <property type="interactions" value="3"/>
</dbReference>
<dbReference type="FunCoup" id="Q91ZE0">
    <property type="interactions" value="757"/>
</dbReference>
<dbReference type="STRING" id="10090.ENSMUSP00000111624"/>
<dbReference type="GlyGen" id="Q91ZE0">
    <property type="glycosylation" value="1 site, 1 O-linked glycan (1 site)"/>
</dbReference>
<dbReference type="iPTMnet" id="Q91ZE0"/>
<dbReference type="PhosphoSitePlus" id="Q91ZE0"/>
<dbReference type="SwissPalm" id="Q91ZE0"/>
<dbReference type="jPOST" id="Q91ZE0"/>
<dbReference type="PaxDb" id="10090-ENSMUSP00000111624"/>
<dbReference type="PeptideAtlas" id="Q91ZE0"/>
<dbReference type="ProteomicsDB" id="259579"/>
<dbReference type="Pumba" id="Q91ZE0"/>
<dbReference type="GeneID" id="192289"/>
<dbReference type="KEGG" id="mmu:192289"/>
<dbReference type="UCSC" id="uc009uyo.1">
    <property type="organism name" value="mouse"/>
</dbReference>
<dbReference type="AGR" id="MGI:2180203"/>
<dbReference type="CTD" id="55217"/>
<dbReference type="MGI" id="MGI:2180203">
    <property type="gene designation" value="Tmlhe"/>
</dbReference>
<dbReference type="VEuPathDB" id="HostDB:ENSMUSG00000079834"/>
<dbReference type="eggNOG" id="KOG3889">
    <property type="taxonomic scope" value="Eukaryota"/>
</dbReference>
<dbReference type="HOGENOM" id="CLU_021859_2_0_1"/>
<dbReference type="InParanoid" id="Q91ZE0"/>
<dbReference type="OrthoDB" id="408743at2759"/>
<dbReference type="PhylomeDB" id="Q91ZE0"/>
<dbReference type="TreeFam" id="TF313805"/>
<dbReference type="BRENDA" id="1.14.11.8">
    <property type="organism ID" value="3474"/>
</dbReference>
<dbReference type="UniPathway" id="UPA00118"/>
<dbReference type="BioGRID-ORCS" id="192289">
    <property type="hits" value="1 hit in 14 CRISPR screens"/>
</dbReference>
<dbReference type="PRO" id="PR:Q91ZE0"/>
<dbReference type="Proteomes" id="UP000000589">
    <property type="component" value="Unplaced"/>
</dbReference>
<dbReference type="RNAct" id="Q91ZE0">
    <property type="molecule type" value="protein"/>
</dbReference>
<dbReference type="GO" id="GO:0005759">
    <property type="term" value="C:mitochondrial matrix"/>
    <property type="evidence" value="ECO:0000266"/>
    <property type="project" value="MGI"/>
</dbReference>
<dbReference type="GO" id="GO:0005739">
    <property type="term" value="C:mitochondrion"/>
    <property type="evidence" value="ECO:0000314"/>
    <property type="project" value="MGI"/>
</dbReference>
<dbReference type="GO" id="GO:0005506">
    <property type="term" value="F:iron ion binding"/>
    <property type="evidence" value="ECO:0007669"/>
    <property type="project" value="InterPro"/>
</dbReference>
<dbReference type="GO" id="GO:0016702">
    <property type="term" value="F:oxidoreductase activity, acting on single donors with incorporation of molecular oxygen, incorporation of two atoms of oxygen"/>
    <property type="evidence" value="ECO:0000314"/>
    <property type="project" value="MGI"/>
</dbReference>
<dbReference type="GO" id="GO:0050353">
    <property type="term" value="F:trimethyllysine dioxygenase activity"/>
    <property type="evidence" value="ECO:0000315"/>
    <property type="project" value="MGI"/>
</dbReference>
<dbReference type="GO" id="GO:0045329">
    <property type="term" value="P:carnitine biosynthetic process"/>
    <property type="evidence" value="ECO:0000314"/>
    <property type="project" value="MGI"/>
</dbReference>
<dbReference type="CDD" id="cd00250">
    <property type="entry name" value="CAS_like"/>
    <property type="match status" value="1"/>
</dbReference>
<dbReference type="FunFam" id="3.60.130.10:FF:000001">
    <property type="entry name" value="Trimethyllysine dioxygenase, mitochondrial"/>
    <property type="match status" value="1"/>
</dbReference>
<dbReference type="FunFam" id="3.30.2020.30:FF:000003">
    <property type="entry name" value="trimethyllysine dioxygenase, mitochondrial isoform X1"/>
    <property type="match status" value="1"/>
</dbReference>
<dbReference type="Gene3D" id="3.30.2020.30">
    <property type="match status" value="1"/>
</dbReference>
<dbReference type="Gene3D" id="3.60.130.10">
    <property type="entry name" value="Clavaminate synthase-like"/>
    <property type="match status" value="1"/>
</dbReference>
<dbReference type="InterPro" id="IPR050411">
    <property type="entry name" value="AlphaKG_dependent_hydroxylases"/>
</dbReference>
<dbReference type="InterPro" id="IPR010376">
    <property type="entry name" value="GBBH-like_N"/>
</dbReference>
<dbReference type="InterPro" id="IPR038492">
    <property type="entry name" value="GBBH-like_N_sf"/>
</dbReference>
<dbReference type="InterPro" id="IPR042098">
    <property type="entry name" value="TauD-like_sf"/>
</dbReference>
<dbReference type="InterPro" id="IPR003819">
    <property type="entry name" value="TauD/TfdA-like"/>
</dbReference>
<dbReference type="InterPro" id="IPR012776">
    <property type="entry name" value="Trimethyllysine_dOase"/>
</dbReference>
<dbReference type="NCBIfam" id="TIGR02410">
    <property type="entry name" value="carnitine_TMLD"/>
    <property type="match status" value="1"/>
</dbReference>
<dbReference type="PANTHER" id="PTHR10696">
    <property type="entry name" value="GAMMA-BUTYROBETAINE HYDROXYLASE-RELATED"/>
    <property type="match status" value="1"/>
</dbReference>
<dbReference type="PANTHER" id="PTHR10696:SF51">
    <property type="entry name" value="TRIMETHYLLYSINE DIOXYGENASE, MITOCHONDRIAL"/>
    <property type="match status" value="1"/>
</dbReference>
<dbReference type="Pfam" id="PF06155">
    <property type="entry name" value="GBBH-like_N"/>
    <property type="match status" value="1"/>
</dbReference>
<dbReference type="Pfam" id="PF02668">
    <property type="entry name" value="TauD"/>
    <property type="match status" value="1"/>
</dbReference>
<dbReference type="SUPFAM" id="SSF51197">
    <property type="entry name" value="Clavaminate synthase-like"/>
    <property type="match status" value="1"/>
</dbReference>
<name>TMLH_MOUSE</name>